<gene>
    <name type="primary">Dph6</name>
    <name type="synonym">Atpbd4</name>
</gene>
<name>DPH6_MOUSE</name>
<organism>
    <name type="scientific">Mus musculus</name>
    <name type="common">Mouse</name>
    <dbReference type="NCBI Taxonomy" id="10090"/>
    <lineage>
        <taxon>Eukaryota</taxon>
        <taxon>Metazoa</taxon>
        <taxon>Chordata</taxon>
        <taxon>Craniata</taxon>
        <taxon>Vertebrata</taxon>
        <taxon>Euteleostomi</taxon>
        <taxon>Mammalia</taxon>
        <taxon>Eutheria</taxon>
        <taxon>Euarchontoglires</taxon>
        <taxon>Glires</taxon>
        <taxon>Rodentia</taxon>
        <taxon>Myomorpha</taxon>
        <taxon>Muroidea</taxon>
        <taxon>Muridae</taxon>
        <taxon>Murinae</taxon>
        <taxon>Mus</taxon>
        <taxon>Mus</taxon>
    </lineage>
</organism>
<feature type="chain" id="PRO_0000282398" description="Diphthine--ammonia ligase">
    <location>
        <begin position="1"/>
        <end position="267"/>
    </location>
</feature>
<feature type="modified residue" description="Phosphotyrosine" evidence="5">
    <location>
        <position position="97"/>
    </location>
</feature>
<feature type="splice variant" id="VSP_024126" description="In isoform 3." evidence="2">
    <original>ELSKKYGVHVCGEGGEYETFTLDCPLFKKKIVVDSSEAVMHSADAFAPVAYLRLSRLHLEEKVSSVPADDETANSIHSS</original>
    <variation>EGLFRSSHALSGCIRTCGLSAALPAALGRESVVSTCG</variation>
    <location>
        <begin position="189"/>
        <end position="267"/>
    </location>
</feature>
<feature type="splice variant" id="VSP_024125" description="In isoform 2." evidence="3">
    <original>SVPADDETANSIHSS</original>
    <variation>KAQMAEIPRRVRGVVSTCG</variation>
    <location>
        <begin position="253"/>
        <end position="267"/>
    </location>
</feature>
<comment type="function">
    <text evidence="1">Amidase that catalyzes the last step of diphthamide biosynthesis using ammonium and ATP. Diphthamide biosynthesis consists in the conversion of an L-histidine residue in the translation elongation factor 2 (EEF2) to diphthamide (By similarity).</text>
</comment>
<comment type="catalytic activity">
    <reaction>
        <text>diphthine-[translation elongation factor 2] + NH4(+) + ATP = diphthamide-[translation elongation factor 2] + AMP + diphosphate + H(+)</text>
        <dbReference type="Rhea" id="RHEA:19753"/>
        <dbReference type="Rhea" id="RHEA-COMP:10172"/>
        <dbReference type="Rhea" id="RHEA-COMP:10174"/>
        <dbReference type="ChEBI" id="CHEBI:15378"/>
        <dbReference type="ChEBI" id="CHEBI:16692"/>
        <dbReference type="ChEBI" id="CHEBI:28938"/>
        <dbReference type="ChEBI" id="CHEBI:30616"/>
        <dbReference type="ChEBI" id="CHEBI:33019"/>
        <dbReference type="ChEBI" id="CHEBI:82696"/>
        <dbReference type="ChEBI" id="CHEBI:456215"/>
        <dbReference type="EC" id="6.3.1.14"/>
    </reaction>
</comment>
<comment type="pathway">
    <text>Protein modification; peptidyl-diphthamide biosynthesis.</text>
</comment>
<comment type="alternative products">
    <event type="alternative splicing"/>
    <isoform>
        <id>Q9CQ28-1</id>
        <name>1</name>
        <sequence type="displayed"/>
    </isoform>
    <isoform>
        <id>Q9CQ28-2</id>
        <name>2</name>
        <sequence type="described" ref="VSP_024125"/>
    </isoform>
    <isoform>
        <id>Q9CQ28-3</id>
        <name>3</name>
        <sequence type="described" ref="VSP_024126"/>
    </isoform>
</comment>
<comment type="similarity">
    <text evidence="4">Belongs to the Diphthine--ammonia ligase family.</text>
</comment>
<proteinExistence type="evidence at protein level"/>
<reference key="1">
    <citation type="journal article" date="2005" name="Science">
        <title>The transcriptional landscape of the mammalian genome.</title>
        <authorList>
            <person name="Carninci P."/>
            <person name="Kasukawa T."/>
            <person name="Katayama S."/>
            <person name="Gough J."/>
            <person name="Frith M.C."/>
            <person name="Maeda N."/>
            <person name="Oyama R."/>
            <person name="Ravasi T."/>
            <person name="Lenhard B."/>
            <person name="Wells C."/>
            <person name="Kodzius R."/>
            <person name="Shimokawa K."/>
            <person name="Bajic V.B."/>
            <person name="Brenner S.E."/>
            <person name="Batalov S."/>
            <person name="Forrest A.R."/>
            <person name="Zavolan M."/>
            <person name="Davis M.J."/>
            <person name="Wilming L.G."/>
            <person name="Aidinis V."/>
            <person name="Allen J.E."/>
            <person name="Ambesi-Impiombato A."/>
            <person name="Apweiler R."/>
            <person name="Aturaliya R.N."/>
            <person name="Bailey T.L."/>
            <person name="Bansal M."/>
            <person name="Baxter L."/>
            <person name="Beisel K.W."/>
            <person name="Bersano T."/>
            <person name="Bono H."/>
            <person name="Chalk A.M."/>
            <person name="Chiu K.P."/>
            <person name="Choudhary V."/>
            <person name="Christoffels A."/>
            <person name="Clutterbuck D.R."/>
            <person name="Crowe M.L."/>
            <person name="Dalla E."/>
            <person name="Dalrymple B.P."/>
            <person name="de Bono B."/>
            <person name="Della Gatta G."/>
            <person name="di Bernardo D."/>
            <person name="Down T."/>
            <person name="Engstrom P."/>
            <person name="Fagiolini M."/>
            <person name="Faulkner G."/>
            <person name="Fletcher C.F."/>
            <person name="Fukushima T."/>
            <person name="Furuno M."/>
            <person name="Futaki S."/>
            <person name="Gariboldi M."/>
            <person name="Georgii-Hemming P."/>
            <person name="Gingeras T.R."/>
            <person name="Gojobori T."/>
            <person name="Green R.E."/>
            <person name="Gustincich S."/>
            <person name="Harbers M."/>
            <person name="Hayashi Y."/>
            <person name="Hensch T.K."/>
            <person name="Hirokawa N."/>
            <person name="Hill D."/>
            <person name="Huminiecki L."/>
            <person name="Iacono M."/>
            <person name="Ikeo K."/>
            <person name="Iwama A."/>
            <person name="Ishikawa T."/>
            <person name="Jakt M."/>
            <person name="Kanapin A."/>
            <person name="Katoh M."/>
            <person name="Kawasawa Y."/>
            <person name="Kelso J."/>
            <person name="Kitamura H."/>
            <person name="Kitano H."/>
            <person name="Kollias G."/>
            <person name="Krishnan S.P."/>
            <person name="Kruger A."/>
            <person name="Kummerfeld S.K."/>
            <person name="Kurochkin I.V."/>
            <person name="Lareau L.F."/>
            <person name="Lazarevic D."/>
            <person name="Lipovich L."/>
            <person name="Liu J."/>
            <person name="Liuni S."/>
            <person name="McWilliam S."/>
            <person name="Madan Babu M."/>
            <person name="Madera M."/>
            <person name="Marchionni L."/>
            <person name="Matsuda H."/>
            <person name="Matsuzawa S."/>
            <person name="Miki H."/>
            <person name="Mignone F."/>
            <person name="Miyake S."/>
            <person name="Morris K."/>
            <person name="Mottagui-Tabar S."/>
            <person name="Mulder N."/>
            <person name="Nakano N."/>
            <person name="Nakauchi H."/>
            <person name="Ng P."/>
            <person name="Nilsson R."/>
            <person name="Nishiguchi S."/>
            <person name="Nishikawa S."/>
            <person name="Nori F."/>
            <person name="Ohara O."/>
            <person name="Okazaki Y."/>
            <person name="Orlando V."/>
            <person name="Pang K.C."/>
            <person name="Pavan W.J."/>
            <person name="Pavesi G."/>
            <person name="Pesole G."/>
            <person name="Petrovsky N."/>
            <person name="Piazza S."/>
            <person name="Reed J."/>
            <person name="Reid J.F."/>
            <person name="Ring B.Z."/>
            <person name="Ringwald M."/>
            <person name="Rost B."/>
            <person name="Ruan Y."/>
            <person name="Salzberg S.L."/>
            <person name="Sandelin A."/>
            <person name="Schneider C."/>
            <person name="Schoenbach C."/>
            <person name="Sekiguchi K."/>
            <person name="Semple C.A."/>
            <person name="Seno S."/>
            <person name="Sessa L."/>
            <person name="Sheng Y."/>
            <person name="Shibata Y."/>
            <person name="Shimada H."/>
            <person name="Shimada K."/>
            <person name="Silva D."/>
            <person name="Sinclair B."/>
            <person name="Sperling S."/>
            <person name="Stupka E."/>
            <person name="Sugiura K."/>
            <person name="Sultana R."/>
            <person name="Takenaka Y."/>
            <person name="Taki K."/>
            <person name="Tammoja K."/>
            <person name="Tan S.L."/>
            <person name="Tang S."/>
            <person name="Taylor M.S."/>
            <person name="Tegner J."/>
            <person name="Teichmann S.A."/>
            <person name="Ueda H.R."/>
            <person name="van Nimwegen E."/>
            <person name="Verardo R."/>
            <person name="Wei C.L."/>
            <person name="Yagi K."/>
            <person name="Yamanishi H."/>
            <person name="Zabarovsky E."/>
            <person name="Zhu S."/>
            <person name="Zimmer A."/>
            <person name="Hide W."/>
            <person name="Bult C."/>
            <person name="Grimmond S.M."/>
            <person name="Teasdale R.D."/>
            <person name="Liu E.T."/>
            <person name="Brusic V."/>
            <person name="Quackenbush J."/>
            <person name="Wahlestedt C."/>
            <person name="Mattick J.S."/>
            <person name="Hume D.A."/>
            <person name="Kai C."/>
            <person name="Sasaki D."/>
            <person name="Tomaru Y."/>
            <person name="Fukuda S."/>
            <person name="Kanamori-Katayama M."/>
            <person name="Suzuki M."/>
            <person name="Aoki J."/>
            <person name="Arakawa T."/>
            <person name="Iida J."/>
            <person name="Imamura K."/>
            <person name="Itoh M."/>
            <person name="Kato T."/>
            <person name="Kawaji H."/>
            <person name="Kawagashira N."/>
            <person name="Kawashima T."/>
            <person name="Kojima M."/>
            <person name="Kondo S."/>
            <person name="Konno H."/>
            <person name="Nakano K."/>
            <person name="Ninomiya N."/>
            <person name="Nishio T."/>
            <person name="Okada M."/>
            <person name="Plessy C."/>
            <person name="Shibata K."/>
            <person name="Shiraki T."/>
            <person name="Suzuki S."/>
            <person name="Tagami M."/>
            <person name="Waki K."/>
            <person name="Watahiki A."/>
            <person name="Okamura-Oho Y."/>
            <person name="Suzuki H."/>
            <person name="Kawai J."/>
            <person name="Hayashizaki Y."/>
        </authorList>
    </citation>
    <scope>NUCLEOTIDE SEQUENCE [LARGE SCALE MRNA] (ISOFORMS 1 AND 2)</scope>
    <source>
        <strain>C57BL/6J</strain>
        <strain>NOD</strain>
        <tissue>Embryo</tissue>
        <tissue>Testis</tissue>
        <tissue>Thymus</tissue>
    </source>
</reference>
<reference key="2">
    <citation type="journal article" date="2009" name="PLoS Biol.">
        <title>Lineage-specific biology revealed by a finished genome assembly of the mouse.</title>
        <authorList>
            <person name="Church D.M."/>
            <person name="Goodstadt L."/>
            <person name="Hillier L.W."/>
            <person name="Zody M.C."/>
            <person name="Goldstein S."/>
            <person name="She X."/>
            <person name="Bult C.J."/>
            <person name="Agarwala R."/>
            <person name="Cherry J.L."/>
            <person name="DiCuccio M."/>
            <person name="Hlavina W."/>
            <person name="Kapustin Y."/>
            <person name="Meric P."/>
            <person name="Maglott D."/>
            <person name="Birtle Z."/>
            <person name="Marques A.C."/>
            <person name="Graves T."/>
            <person name="Zhou S."/>
            <person name="Teague B."/>
            <person name="Potamousis K."/>
            <person name="Churas C."/>
            <person name="Place M."/>
            <person name="Herschleb J."/>
            <person name="Runnheim R."/>
            <person name="Forrest D."/>
            <person name="Amos-Landgraf J."/>
            <person name="Schwartz D.C."/>
            <person name="Cheng Z."/>
            <person name="Lindblad-Toh K."/>
            <person name="Eichler E.E."/>
            <person name="Ponting C.P."/>
        </authorList>
    </citation>
    <scope>NUCLEOTIDE SEQUENCE [LARGE SCALE GENOMIC DNA]</scope>
    <source>
        <strain>C57BL/6J</strain>
    </source>
</reference>
<reference key="3">
    <citation type="journal article" date="2004" name="Genome Res.">
        <title>The status, quality, and expansion of the NIH full-length cDNA project: the Mammalian Gene Collection (MGC).</title>
        <authorList>
            <consortium name="The MGC Project Team"/>
        </authorList>
    </citation>
    <scope>NUCLEOTIDE SEQUENCE [LARGE SCALE MRNA] (ISOFORM 3)</scope>
    <source>
        <tissue>Eye</tissue>
    </source>
</reference>
<reference key="4">
    <citation type="journal article" date="2005" name="Nat. Biotechnol.">
        <title>Immunoaffinity profiling of tyrosine phosphorylation in cancer cells.</title>
        <authorList>
            <person name="Rush J."/>
            <person name="Moritz A."/>
            <person name="Lee K.A."/>
            <person name="Guo A."/>
            <person name="Goss V.L."/>
            <person name="Spek E.J."/>
            <person name="Zhang H."/>
            <person name="Zha X.-M."/>
            <person name="Polakiewicz R.D."/>
            <person name="Comb M.J."/>
        </authorList>
    </citation>
    <scope>PHOSPHORYLATION [LARGE SCALE ANALYSIS] AT TYR-97</scope>
    <scope>IDENTIFICATION BY MASS SPECTROMETRY [LARGE SCALE ANALYSIS]</scope>
</reference>
<reference key="5">
    <citation type="journal article" date="2010" name="Cell">
        <title>A tissue-specific atlas of mouse protein phosphorylation and expression.</title>
        <authorList>
            <person name="Huttlin E.L."/>
            <person name="Jedrychowski M.P."/>
            <person name="Elias J.E."/>
            <person name="Goswami T."/>
            <person name="Rad R."/>
            <person name="Beausoleil S.A."/>
            <person name="Villen J."/>
            <person name="Haas W."/>
            <person name="Sowa M.E."/>
            <person name="Gygi S.P."/>
        </authorList>
    </citation>
    <scope>IDENTIFICATION BY MASS SPECTROMETRY [LARGE SCALE ANALYSIS]</scope>
    <source>
        <tissue>Brain</tissue>
        <tissue>Heart</tissue>
        <tissue>Kidney</tissue>
        <tissue>Spleen</tissue>
        <tissue>Testis</tissue>
    </source>
</reference>
<protein>
    <recommendedName>
        <fullName>Diphthine--ammonia ligase</fullName>
        <ecNumber>6.3.1.14</ecNumber>
    </recommendedName>
    <alternativeName>
        <fullName>ATP-binding domain-containing protein 4</fullName>
    </alternativeName>
    <alternativeName>
        <fullName>Diphthamide synthase</fullName>
    </alternativeName>
    <alternativeName>
        <fullName>Diphthamide synthetase</fullName>
    </alternativeName>
    <alternativeName>
        <fullName>Protein DPH6 homolog</fullName>
    </alternativeName>
</protein>
<evidence type="ECO:0000250" key="1"/>
<evidence type="ECO:0000303" key="2">
    <source>
    </source>
</evidence>
<evidence type="ECO:0000303" key="3">
    <source>
    </source>
</evidence>
<evidence type="ECO:0000305" key="4"/>
<evidence type="ECO:0007744" key="5">
    <source>
    </source>
</evidence>
<accession>Q9CQ28</accession>
<accession>Q3UL00</accession>
<accession>Q8R1W5</accession>
<keyword id="KW-0025">Alternative splicing</keyword>
<keyword id="KW-0067">ATP-binding</keyword>
<keyword id="KW-0436">Ligase</keyword>
<keyword id="KW-0547">Nucleotide-binding</keyword>
<keyword id="KW-0597">Phosphoprotein</keyword>
<keyword id="KW-1185">Reference proteome</keyword>
<dbReference type="EC" id="6.3.1.14"/>
<dbReference type="EMBL" id="AK006965">
    <property type="protein sequence ID" value="BAB24811.1"/>
    <property type="molecule type" value="mRNA"/>
</dbReference>
<dbReference type="EMBL" id="AK007021">
    <property type="protein sequence ID" value="BAB24832.1"/>
    <property type="molecule type" value="mRNA"/>
</dbReference>
<dbReference type="EMBL" id="AK017595">
    <property type="protein sequence ID" value="BAB30829.1"/>
    <property type="molecule type" value="mRNA"/>
</dbReference>
<dbReference type="EMBL" id="AK088160">
    <property type="protein sequence ID" value="BAC40182.1"/>
    <property type="molecule type" value="mRNA"/>
</dbReference>
<dbReference type="EMBL" id="AK145789">
    <property type="protein sequence ID" value="BAE26651.1"/>
    <property type="molecule type" value="mRNA"/>
</dbReference>
<dbReference type="EMBL" id="AL732404">
    <property type="status" value="NOT_ANNOTATED_CDS"/>
    <property type="molecule type" value="Genomic_DNA"/>
</dbReference>
<dbReference type="EMBL" id="BC022995">
    <property type="protein sequence ID" value="AAH22995.1"/>
    <property type="molecule type" value="mRNA"/>
</dbReference>
<dbReference type="CCDS" id="CCDS16567.1">
    <molecule id="Q9CQ28-1"/>
</dbReference>
<dbReference type="CCDS" id="CCDS89535.1">
    <molecule id="Q9CQ28-3"/>
</dbReference>
<dbReference type="CCDS" id="CCDS89536.1">
    <molecule id="Q9CQ28-2"/>
</dbReference>
<dbReference type="RefSeq" id="NP_001343367.1">
    <molecule id="Q9CQ28-2"/>
    <property type="nucleotide sequence ID" value="NM_001356438.1"/>
</dbReference>
<dbReference type="RefSeq" id="NP_001343368.1">
    <molecule id="Q9CQ28-3"/>
    <property type="nucleotide sequence ID" value="NM_001356439.1"/>
</dbReference>
<dbReference type="RefSeq" id="NP_079951.1">
    <molecule id="Q9CQ28-1"/>
    <property type="nucleotide sequence ID" value="NM_025675.5"/>
</dbReference>
<dbReference type="SMR" id="Q9CQ28"/>
<dbReference type="BioGRID" id="211610">
    <property type="interactions" value="1"/>
</dbReference>
<dbReference type="FunCoup" id="Q9CQ28">
    <property type="interactions" value="1316"/>
</dbReference>
<dbReference type="IntAct" id="Q9CQ28">
    <property type="interactions" value="1"/>
</dbReference>
<dbReference type="MINT" id="Q9CQ28"/>
<dbReference type="STRING" id="10090.ENSMUSP00000099601"/>
<dbReference type="iPTMnet" id="Q9CQ28"/>
<dbReference type="PhosphoSitePlus" id="Q9CQ28"/>
<dbReference type="PaxDb" id="10090-ENSMUSP00000099601"/>
<dbReference type="PeptideAtlas" id="Q9CQ28"/>
<dbReference type="ProteomicsDB" id="279564">
    <molecule id="Q9CQ28-1"/>
</dbReference>
<dbReference type="ProteomicsDB" id="279565">
    <molecule id="Q9CQ28-2"/>
</dbReference>
<dbReference type="ProteomicsDB" id="279566">
    <molecule id="Q9CQ28-3"/>
</dbReference>
<dbReference type="Pumba" id="Q9CQ28"/>
<dbReference type="Antibodypedia" id="51931">
    <property type="antibodies" value="53 antibodies from 15 providers"/>
</dbReference>
<dbReference type="Ensembl" id="ENSMUST00000028640.14">
    <molecule id="Q9CQ28-3"/>
    <property type="protein sequence ID" value="ENSMUSP00000028640.8"/>
    <property type="gene ID" value="ENSMUSG00000057147.14"/>
</dbReference>
<dbReference type="Ensembl" id="ENSMUST00000055144.8">
    <molecule id="Q9CQ28-2"/>
    <property type="protein sequence ID" value="ENSMUSP00000060730.8"/>
    <property type="gene ID" value="ENSMUSG00000057147.14"/>
</dbReference>
<dbReference type="Ensembl" id="ENSMUST00000102542.10">
    <molecule id="Q9CQ28-1"/>
    <property type="protein sequence ID" value="ENSMUSP00000099601.4"/>
    <property type="gene ID" value="ENSMUSG00000057147.14"/>
</dbReference>
<dbReference type="GeneID" id="66632"/>
<dbReference type="KEGG" id="mmu:66632"/>
<dbReference type="UCSC" id="uc008lqk.1">
    <molecule id="Q9CQ28-1"/>
    <property type="organism name" value="mouse"/>
</dbReference>
<dbReference type="UCSC" id="uc008lql.1">
    <molecule id="Q9CQ28-3"/>
    <property type="organism name" value="mouse"/>
</dbReference>
<dbReference type="UCSC" id="uc012cbd.1">
    <molecule id="Q9CQ28-2"/>
    <property type="organism name" value="mouse"/>
</dbReference>
<dbReference type="AGR" id="MGI:1913882"/>
<dbReference type="CTD" id="89978"/>
<dbReference type="MGI" id="MGI:1913882">
    <property type="gene designation" value="Dph6"/>
</dbReference>
<dbReference type="VEuPathDB" id="HostDB:ENSMUSG00000057147"/>
<dbReference type="eggNOG" id="KOG2316">
    <property type="taxonomic scope" value="Eukaryota"/>
</dbReference>
<dbReference type="GeneTree" id="ENSGT00420000029820"/>
<dbReference type="HOGENOM" id="CLU_010289_0_1_1"/>
<dbReference type="InParanoid" id="Q9CQ28"/>
<dbReference type="OMA" id="NYALYWA"/>
<dbReference type="PhylomeDB" id="Q9CQ28"/>
<dbReference type="TreeFam" id="TF313566"/>
<dbReference type="Reactome" id="R-MMU-5358493">
    <property type="pathway name" value="Synthesis of diphthamide-EEF2"/>
</dbReference>
<dbReference type="UniPathway" id="UPA00559"/>
<dbReference type="BioGRID-ORCS" id="66632">
    <property type="hits" value="25 hits in 78 CRISPR screens"/>
</dbReference>
<dbReference type="ChiTaRS" id="Dph6">
    <property type="organism name" value="mouse"/>
</dbReference>
<dbReference type="PRO" id="PR:Q9CQ28"/>
<dbReference type="Proteomes" id="UP000000589">
    <property type="component" value="Chromosome 2"/>
</dbReference>
<dbReference type="RNAct" id="Q9CQ28">
    <property type="molecule type" value="protein"/>
</dbReference>
<dbReference type="Bgee" id="ENSMUSG00000057147">
    <property type="expression patterns" value="Expressed in animal zygote and 245 other cell types or tissues"/>
</dbReference>
<dbReference type="GO" id="GO:0005524">
    <property type="term" value="F:ATP binding"/>
    <property type="evidence" value="ECO:0007669"/>
    <property type="project" value="UniProtKB-KW"/>
</dbReference>
<dbReference type="GO" id="GO:0017178">
    <property type="term" value="F:diphthine-ammonia ligase activity"/>
    <property type="evidence" value="ECO:0000266"/>
    <property type="project" value="MGI"/>
</dbReference>
<dbReference type="GO" id="GO:0017183">
    <property type="term" value="P:protein histidyl modification to diphthamide"/>
    <property type="evidence" value="ECO:0000266"/>
    <property type="project" value="MGI"/>
</dbReference>
<dbReference type="CDD" id="cd01994">
    <property type="entry name" value="AANH_PF0828-like"/>
    <property type="match status" value="1"/>
</dbReference>
<dbReference type="FunFam" id="3.90.1490.10:FF:000001">
    <property type="entry name" value="Diphthine--ammonia ligase"/>
    <property type="match status" value="1"/>
</dbReference>
<dbReference type="FunFam" id="3.40.50.620:FF:000069">
    <property type="entry name" value="diphthine--ammonia ligase"/>
    <property type="match status" value="1"/>
</dbReference>
<dbReference type="Gene3D" id="3.40.50.620">
    <property type="entry name" value="HUPs"/>
    <property type="match status" value="1"/>
</dbReference>
<dbReference type="Gene3D" id="3.90.1490.10">
    <property type="entry name" value="putative n-type atp pyrophosphatase, domain 2"/>
    <property type="match status" value="1"/>
</dbReference>
<dbReference type="InterPro" id="IPR002761">
    <property type="entry name" value="Diphthami_syn_dom"/>
</dbReference>
<dbReference type="InterPro" id="IPR030662">
    <property type="entry name" value="DPH6/MJ0570"/>
</dbReference>
<dbReference type="InterPro" id="IPR014729">
    <property type="entry name" value="Rossmann-like_a/b/a_fold"/>
</dbReference>
<dbReference type="NCBIfam" id="TIGR00290">
    <property type="entry name" value="MJ0570_dom"/>
    <property type="match status" value="1"/>
</dbReference>
<dbReference type="PANTHER" id="PTHR12196:SF2">
    <property type="entry name" value="DIPHTHINE--AMMONIA LIGASE"/>
    <property type="match status" value="1"/>
</dbReference>
<dbReference type="PANTHER" id="PTHR12196">
    <property type="entry name" value="DOMAIN OF UNKNOWN FUNCTION 71 DUF71 -CONTAINING PROTEIN"/>
    <property type="match status" value="1"/>
</dbReference>
<dbReference type="Pfam" id="PF01902">
    <property type="entry name" value="Diphthami_syn_2"/>
    <property type="match status" value="1"/>
</dbReference>
<dbReference type="PIRSF" id="PIRSF039123">
    <property type="entry name" value="Diphthamide_synthase"/>
    <property type="match status" value="1"/>
</dbReference>
<dbReference type="SUPFAM" id="SSF52402">
    <property type="entry name" value="Adenine nucleotide alpha hydrolases-like"/>
    <property type="match status" value="1"/>
</dbReference>
<sequence length="267" mass="29922">MRVAALISGGKDSCYNMMQCIAEGHQIVALANLRPDENQVESDELDSYMYQTVGHHAIDLYAEAMALPLYRRAIRGRSLETGRVYTQCEGDEVEDLYELLKLVKEKEEIEGVSVGAILSDYQRGRVENVCKRLNLQPLAYLWQRNQEDLLREMIASNIKAIIIKVAALGLDPDKHLGKTLVEMEPYLLELSKKYGVHVCGEGGEYETFTLDCPLFKKKIVVDSSEAVMHSADAFAPVAYLRLSRLHLEEKVSSVPADDETANSIHSS</sequence>